<dbReference type="EC" id="2.7.7.6"/>
<dbReference type="EMBL" id="U94848">
    <property type="protein sequence ID" value="AAB96494.1"/>
    <property type="molecule type" value="Genomic_DNA"/>
</dbReference>
<dbReference type="EMBL" id="AY603355">
    <property type="protein sequence ID" value="AAT10473.1"/>
    <property type="molecule type" value="Genomic_DNA"/>
</dbReference>
<dbReference type="PIR" id="T37351">
    <property type="entry name" value="T37351"/>
</dbReference>
<dbReference type="RefSeq" id="YP_232965.1">
    <property type="nucleotide sequence ID" value="NC_006998.1"/>
</dbReference>
<dbReference type="PDB" id="6RIE">
    <property type="method" value="EM"/>
    <property type="resolution" value="3.10 A"/>
    <property type="chains" value="J=1-63"/>
</dbReference>
<dbReference type="PDBsum" id="6RIE"/>
<dbReference type="SMR" id="P68314"/>
<dbReference type="DNASU" id="3707539"/>
<dbReference type="GeneID" id="3707539"/>
<dbReference type="KEGG" id="vg:3707539"/>
<dbReference type="Proteomes" id="UP000159908">
    <property type="component" value="Segment"/>
</dbReference>
<dbReference type="Proteomes" id="UP000172909">
    <property type="component" value="Segment"/>
</dbReference>
<dbReference type="GO" id="GO:0000428">
    <property type="term" value="C:DNA-directed RNA polymerase complex"/>
    <property type="evidence" value="ECO:0007669"/>
    <property type="project" value="UniProtKB-KW"/>
</dbReference>
<dbReference type="GO" id="GO:0044423">
    <property type="term" value="C:virion component"/>
    <property type="evidence" value="ECO:0007669"/>
    <property type="project" value="UniProtKB-KW"/>
</dbReference>
<dbReference type="GO" id="GO:0003677">
    <property type="term" value="F:DNA binding"/>
    <property type="evidence" value="ECO:0007669"/>
    <property type="project" value="InterPro"/>
</dbReference>
<dbReference type="GO" id="GO:0003899">
    <property type="term" value="F:DNA-directed RNA polymerase activity"/>
    <property type="evidence" value="ECO:0007669"/>
    <property type="project" value="UniProtKB-EC"/>
</dbReference>
<dbReference type="GO" id="GO:0006351">
    <property type="term" value="P:DNA-templated transcription"/>
    <property type="evidence" value="ECO:0007669"/>
    <property type="project" value="InterPro"/>
</dbReference>
<dbReference type="InterPro" id="IPR008448">
    <property type="entry name" value="RNA_pol_7kDa_chordopoxvir"/>
</dbReference>
<dbReference type="Pfam" id="PF05864">
    <property type="entry name" value="Chordopox_RPO7"/>
    <property type="match status" value="1"/>
</dbReference>
<comment type="function">
    <text evidence="1">Part of the DNA-dependent RNA polymerase which catalyzes the transcription of viral DNA into RNA using the four ribonucleoside triphosphates as substrates. Responsible for the transcription of early, intermediate and late genes. DNA-dependent RNA polymerase associates with the early transcription factor (ETF), itself composed of OPG118 and OPG134, thereby allowing the early genes transcription. Late transcription, and probably also intermediate transcription, require newly synthesized RNA polymerase.</text>
</comment>
<comment type="catalytic activity">
    <reaction>
        <text>RNA(n) + a ribonucleoside 5'-triphosphate = RNA(n+1) + diphosphate</text>
        <dbReference type="Rhea" id="RHEA:21248"/>
        <dbReference type="Rhea" id="RHEA-COMP:14527"/>
        <dbReference type="Rhea" id="RHEA-COMP:17342"/>
        <dbReference type="ChEBI" id="CHEBI:33019"/>
        <dbReference type="ChEBI" id="CHEBI:61557"/>
        <dbReference type="ChEBI" id="CHEBI:140395"/>
        <dbReference type="EC" id="2.7.7.6"/>
    </reaction>
</comment>
<comment type="subunit">
    <text evidence="1">The DNA-dependent RNA polymerase (vRNAP) consists of eight subunits encoded by early viral genes and termed according to their apparent molecular masses Rpo147, Rpo132, Rpo35, Rpo30, Rpo22, Rpo19, Rpo18, and Rpo7. The same holoenzyme, with the addition of the transcription-specificity factor RAP94, is used for early gene expression.</text>
</comment>
<comment type="subcellular location">
    <subcellularLocation>
        <location evidence="1">Virion</location>
    </subcellularLocation>
    <text evidence="1">All the enzymes and other proteins required to synthesize early mRNAs are packaged within the virion core along with the DNA genome. This is necessary because viral early mRNAs are synthesized within minutes after virus entry into the cell and are extruded through pores in the core particle.</text>
</comment>
<comment type="induction">
    <text>Expressed in the early phase of the viral replicative cycle.</text>
</comment>
<comment type="similarity">
    <text evidence="2">Belongs to the poxviridae DNA-directed RNA polymerase 7 kDa subunit family.</text>
</comment>
<feature type="chain" id="PRO_0000099155" description="DNA-directed RNA polymerase 7 kDa subunit">
    <location>
        <begin position="1"/>
        <end position="63"/>
    </location>
</feature>
<feature type="turn" evidence="3">
    <location>
        <begin position="8"/>
        <end position="10"/>
    </location>
</feature>
<feature type="helix" evidence="3">
    <location>
        <begin position="15"/>
        <end position="22"/>
    </location>
</feature>
<feature type="helix" evidence="3">
    <location>
        <begin position="28"/>
        <end position="31"/>
    </location>
</feature>
<feature type="helix" evidence="3">
    <location>
        <begin position="38"/>
        <end position="46"/>
    </location>
</feature>
<feature type="strand" evidence="3">
    <location>
        <begin position="59"/>
        <end position="61"/>
    </location>
</feature>
<name>RP07_VACCA</name>
<accession>P68314</accession>
<accession>Q76ZU0</accession>
<accession>Q89560</accession>
<gene>
    <name type="primary">OPG090</name>
    <name type="synonym">RPO7</name>
    <name type="ordered locus">MVA075R</name>
    <name type="ordered locus">ACAM3000_MVA_075</name>
    <name type="ORF">G5.5R</name>
</gene>
<evidence type="ECO:0000250" key="1">
    <source>
        <dbReference type="UniProtKB" id="P68317"/>
    </source>
</evidence>
<evidence type="ECO:0000305" key="2"/>
<evidence type="ECO:0007829" key="3">
    <source>
        <dbReference type="PDB" id="6RIE"/>
    </source>
</evidence>
<organismHost>
    <name type="scientific">Homo sapiens</name>
    <name type="common">Human</name>
    <dbReference type="NCBI Taxonomy" id="9606"/>
</organismHost>
<reference key="1">
    <citation type="journal article" date="1998" name="Virology">
        <title>The complete genomic sequence of the modified vaccinia Ankara strain: comparison with other orthopoxviruses.</title>
        <authorList>
            <person name="Antoine G."/>
            <person name="Scheiflinger F."/>
            <person name="Dorner F."/>
            <person name="Falkner F.G."/>
        </authorList>
    </citation>
    <scope>NUCLEOTIDE SEQUENCE [LARGE SCALE GENOMIC DNA]</scope>
</reference>
<reference key="2">
    <citation type="submission" date="2004-04" db="EMBL/GenBank/DDBJ databases">
        <authorList>
            <person name="Esposito J.J."/>
            <person name="Frace M."/>
            <person name="Sammons S.A."/>
            <person name="Olsen-Rasmussen M.S."/>
            <person name="Osborne J."/>
            <person name="Khristova M."/>
            <person name="Wohlhueter R.M."/>
        </authorList>
    </citation>
    <scope>NUCLEOTIDE SEQUENCE [LARGE SCALE GENOMIC DNA]</scope>
    <source>
        <strain>Isolate Acambis 3000</strain>
    </source>
</reference>
<reference key="3">
    <citation type="journal article" date="2003" name="J. Gen. Virol.">
        <title>Vaccinia virus transcription.</title>
        <authorList>
            <person name="Broyles S.S."/>
        </authorList>
    </citation>
    <scope>REVIEW</scope>
</reference>
<protein>
    <recommendedName>
        <fullName>DNA-directed RNA polymerase 7 kDa subunit</fullName>
        <ecNumber>2.7.7.6</ecNumber>
    </recommendedName>
</protein>
<proteinExistence type="evidence at protein level"/>
<organism>
    <name type="scientific">Vaccinia virus (strain Ankara)</name>
    <name type="common">VACV</name>
    <dbReference type="NCBI Taxonomy" id="126794"/>
    <lineage>
        <taxon>Viruses</taxon>
        <taxon>Varidnaviria</taxon>
        <taxon>Bamfordvirae</taxon>
        <taxon>Nucleocytoviricota</taxon>
        <taxon>Pokkesviricetes</taxon>
        <taxon>Chitovirales</taxon>
        <taxon>Poxviridae</taxon>
        <taxon>Chordopoxvirinae</taxon>
        <taxon>Orthopoxvirus</taxon>
        <taxon>Vaccinia virus</taxon>
    </lineage>
</organism>
<keyword id="KW-0002">3D-structure</keyword>
<keyword id="KW-0240">DNA-directed RNA polymerase</keyword>
<keyword id="KW-0244">Early protein</keyword>
<keyword id="KW-0548">Nucleotidyltransferase</keyword>
<keyword id="KW-0804">Transcription</keyword>
<keyword id="KW-0808">Transferase</keyword>
<keyword id="KW-0946">Virion</keyword>
<sequence length="63" mass="7288">MVFQLVCSTCGKDISHERYKLIIRKKSLKDVLVSVKNECCRLKLSTQIEPQRNLTVQPLLDIN</sequence>